<proteinExistence type="inferred from homology"/>
<comment type="function">
    <text evidence="1">Activator of asnA transcription.</text>
</comment>
<sequence length="150" mass="17060">MHNIDSLDQKILRVLTKDARTPYAEMAKNFGVSPGTIHVRVEKMRQSGIIKGTKVIIDERKLGYDVCCFIGIILKSAKDYEKVIKKLESFDEVVEAYYTTGNYSIFLKVMTHTIAELHSVLATKIQLIDEIQSTETLISMQNPILRDIKP</sequence>
<feature type="chain" id="PRO_0000111723" description="Regulatory protein AsnC">
    <location>
        <begin position="1"/>
        <end position="150"/>
    </location>
</feature>
<feature type="domain" description="HTH asnC-type" evidence="2">
    <location>
        <begin position="4"/>
        <end position="65"/>
    </location>
</feature>
<feature type="DNA-binding region" description="H-T-H motif" evidence="2">
    <location>
        <begin position="23"/>
        <end position="42"/>
    </location>
</feature>
<organism>
    <name type="scientific">Haemophilus influenzae (strain ATCC 51907 / DSM 11121 / KW20 / Rd)</name>
    <dbReference type="NCBI Taxonomy" id="71421"/>
    <lineage>
        <taxon>Bacteria</taxon>
        <taxon>Pseudomonadati</taxon>
        <taxon>Pseudomonadota</taxon>
        <taxon>Gammaproteobacteria</taxon>
        <taxon>Pasteurellales</taxon>
        <taxon>Pasteurellaceae</taxon>
        <taxon>Haemophilus</taxon>
    </lineage>
</organism>
<dbReference type="EMBL" id="L42023">
    <property type="protein sequence ID" value="AAC22221.1"/>
    <property type="molecule type" value="Genomic_DNA"/>
</dbReference>
<dbReference type="PIR" id="G64077">
    <property type="entry name" value="G64077"/>
</dbReference>
<dbReference type="RefSeq" id="NP_438720.1">
    <property type="nucleotide sequence ID" value="NC_000907.1"/>
</dbReference>
<dbReference type="SMR" id="P44337"/>
<dbReference type="STRING" id="71421.HI_0563"/>
<dbReference type="EnsemblBacteria" id="AAC22221">
    <property type="protein sequence ID" value="AAC22221"/>
    <property type="gene ID" value="HI_0563"/>
</dbReference>
<dbReference type="KEGG" id="hin:HI_0563"/>
<dbReference type="PATRIC" id="fig|71421.8.peg.583"/>
<dbReference type="eggNOG" id="COG1522">
    <property type="taxonomic scope" value="Bacteria"/>
</dbReference>
<dbReference type="HOGENOM" id="CLU_091233_5_0_6"/>
<dbReference type="OrthoDB" id="1094536at2"/>
<dbReference type="PhylomeDB" id="P44337"/>
<dbReference type="BioCyc" id="HINF71421:G1GJ1-575-MONOMER"/>
<dbReference type="Proteomes" id="UP000000579">
    <property type="component" value="Chromosome"/>
</dbReference>
<dbReference type="GO" id="GO:0043565">
    <property type="term" value="F:sequence-specific DNA binding"/>
    <property type="evidence" value="ECO:0007669"/>
    <property type="project" value="InterPro"/>
</dbReference>
<dbReference type="CDD" id="cd00090">
    <property type="entry name" value="HTH_ARSR"/>
    <property type="match status" value="1"/>
</dbReference>
<dbReference type="Gene3D" id="3.30.70.920">
    <property type="match status" value="1"/>
</dbReference>
<dbReference type="Gene3D" id="1.10.10.10">
    <property type="entry name" value="Winged helix-like DNA-binding domain superfamily/Winged helix DNA-binding domain"/>
    <property type="match status" value="1"/>
</dbReference>
<dbReference type="InterPro" id="IPR011991">
    <property type="entry name" value="ArsR-like_HTH"/>
</dbReference>
<dbReference type="InterPro" id="IPR000485">
    <property type="entry name" value="AsnC-type_HTH_dom"/>
</dbReference>
<dbReference type="InterPro" id="IPR011008">
    <property type="entry name" value="Dimeric_a/b-barrel"/>
</dbReference>
<dbReference type="InterPro" id="IPR050684">
    <property type="entry name" value="HTH-Siroheme_Decarb"/>
</dbReference>
<dbReference type="InterPro" id="IPR019888">
    <property type="entry name" value="Tscrpt_reg_AsnC-like"/>
</dbReference>
<dbReference type="InterPro" id="IPR019887">
    <property type="entry name" value="Tscrpt_reg_AsnC/Lrp_C"/>
</dbReference>
<dbReference type="InterPro" id="IPR019885">
    <property type="entry name" value="Tscrpt_reg_HTH_AsnC-type_CS"/>
</dbReference>
<dbReference type="InterPro" id="IPR036388">
    <property type="entry name" value="WH-like_DNA-bd_sf"/>
</dbReference>
<dbReference type="InterPro" id="IPR036390">
    <property type="entry name" value="WH_DNA-bd_sf"/>
</dbReference>
<dbReference type="NCBIfam" id="NF008384">
    <property type="entry name" value="PRK11179.1"/>
    <property type="match status" value="1"/>
</dbReference>
<dbReference type="PANTHER" id="PTHR43413:SF6">
    <property type="entry name" value="REGULATORY PROTEIN ASNC"/>
    <property type="match status" value="1"/>
</dbReference>
<dbReference type="PANTHER" id="PTHR43413">
    <property type="entry name" value="TRANSCRIPTIONAL REGULATOR, ASNC FAMILY"/>
    <property type="match status" value="1"/>
</dbReference>
<dbReference type="Pfam" id="PF01037">
    <property type="entry name" value="AsnC_trans_reg"/>
    <property type="match status" value="1"/>
</dbReference>
<dbReference type="Pfam" id="PF13404">
    <property type="entry name" value="HTH_AsnC-type"/>
    <property type="match status" value="1"/>
</dbReference>
<dbReference type="PRINTS" id="PR00033">
    <property type="entry name" value="HTHASNC"/>
</dbReference>
<dbReference type="SMART" id="SM00344">
    <property type="entry name" value="HTH_ASNC"/>
    <property type="match status" value="1"/>
</dbReference>
<dbReference type="SUPFAM" id="SSF54909">
    <property type="entry name" value="Dimeric alpha+beta barrel"/>
    <property type="match status" value="1"/>
</dbReference>
<dbReference type="SUPFAM" id="SSF46785">
    <property type="entry name" value="Winged helix' DNA-binding domain"/>
    <property type="match status" value="1"/>
</dbReference>
<dbReference type="PROSITE" id="PS00519">
    <property type="entry name" value="HTH_ASNC_1"/>
    <property type="match status" value="1"/>
</dbReference>
<dbReference type="PROSITE" id="PS50956">
    <property type="entry name" value="HTH_ASNC_2"/>
    <property type="match status" value="1"/>
</dbReference>
<name>ASNC_HAEIN</name>
<reference key="1">
    <citation type="journal article" date="1995" name="Science">
        <title>Whole-genome random sequencing and assembly of Haemophilus influenzae Rd.</title>
        <authorList>
            <person name="Fleischmann R.D."/>
            <person name="Adams M.D."/>
            <person name="White O."/>
            <person name="Clayton R.A."/>
            <person name="Kirkness E.F."/>
            <person name="Kerlavage A.R."/>
            <person name="Bult C.J."/>
            <person name="Tomb J.-F."/>
            <person name="Dougherty B.A."/>
            <person name="Merrick J.M."/>
            <person name="McKenney K."/>
            <person name="Sutton G.G."/>
            <person name="FitzHugh W."/>
            <person name="Fields C.A."/>
            <person name="Gocayne J.D."/>
            <person name="Scott J.D."/>
            <person name="Shirley R."/>
            <person name="Liu L.-I."/>
            <person name="Glodek A."/>
            <person name="Kelley J.M."/>
            <person name="Weidman J.F."/>
            <person name="Phillips C.A."/>
            <person name="Spriggs T."/>
            <person name="Hedblom E."/>
            <person name="Cotton M.D."/>
            <person name="Utterback T.R."/>
            <person name="Hanna M.C."/>
            <person name="Nguyen D.T."/>
            <person name="Saudek D.M."/>
            <person name="Brandon R.C."/>
            <person name="Fine L.D."/>
            <person name="Fritchman J.L."/>
            <person name="Fuhrmann J.L."/>
            <person name="Geoghagen N.S.M."/>
            <person name="Gnehm C.L."/>
            <person name="McDonald L.A."/>
            <person name="Small K.V."/>
            <person name="Fraser C.M."/>
            <person name="Smith H.O."/>
            <person name="Venter J.C."/>
        </authorList>
    </citation>
    <scope>NUCLEOTIDE SEQUENCE [LARGE SCALE GENOMIC DNA]</scope>
    <source>
        <strain>ATCC 51907 / DSM 11121 / KW20 / Rd</strain>
    </source>
</reference>
<evidence type="ECO:0000250" key="1"/>
<evidence type="ECO:0000255" key="2">
    <source>
        <dbReference type="PROSITE-ProRule" id="PRU00319"/>
    </source>
</evidence>
<keyword id="KW-0010">Activator</keyword>
<keyword id="KW-0238">DNA-binding</keyword>
<keyword id="KW-1185">Reference proteome</keyword>
<keyword id="KW-0804">Transcription</keyword>
<keyword id="KW-0805">Transcription regulation</keyword>
<accession>P44337</accession>
<gene>
    <name type="primary">asnC</name>
    <name type="ordered locus">HI_0563</name>
</gene>
<protein>
    <recommendedName>
        <fullName>Regulatory protein AsnC</fullName>
    </recommendedName>
</protein>